<protein>
    <recommendedName>
        <fullName evidence="1">Urease subunit beta</fullName>
        <ecNumber evidence="1">3.5.1.5</ecNumber>
    </recommendedName>
    <alternativeName>
        <fullName evidence="1">Urea amidohydrolase subunit beta</fullName>
    </alternativeName>
</protein>
<evidence type="ECO:0000255" key="1">
    <source>
        <dbReference type="HAMAP-Rule" id="MF_01954"/>
    </source>
</evidence>
<accession>Q8XXT0</accession>
<keyword id="KW-0963">Cytoplasm</keyword>
<keyword id="KW-0378">Hydrolase</keyword>
<keyword id="KW-1185">Reference proteome</keyword>
<name>URE2_RALN1</name>
<comment type="catalytic activity">
    <reaction evidence="1">
        <text>urea + 2 H2O + H(+) = hydrogencarbonate + 2 NH4(+)</text>
        <dbReference type="Rhea" id="RHEA:20557"/>
        <dbReference type="ChEBI" id="CHEBI:15377"/>
        <dbReference type="ChEBI" id="CHEBI:15378"/>
        <dbReference type="ChEBI" id="CHEBI:16199"/>
        <dbReference type="ChEBI" id="CHEBI:17544"/>
        <dbReference type="ChEBI" id="CHEBI:28938"/>
        <dbReference type="EC" id="3.5.1.5"/>
    </reaction>
</comment>
<comment type="pathway">
    <text evidence="1">Nitrogen metabolism; urea degradation; CO(2) and NH(3) from urea (urease route): step 1/1.</text>
</comment>
<comment type="subunit">
    <text evidence="1">Heterotrimer of UreA (gamma), UreB (beta) and UreC (alpha) subunits. Three heterotrimers associate to form the active enzyme.</text>
</comment>
<comment type="subcellular location">
    <subcellularLocation>
        <location evidence="1">Cytoplasm</location>
    </subcellularLocation>
</comment>
<comment type="similarity">
    <text evidence="1">Belongs to the urease beta subunit family.</text>
</comment>
<organism>
    <name type="scientific">Ralstonia nicotianae (strain ATCC BAA-1114 / GMI1000)</name>
    <name type="common">Ralstonia solanacearum</name>
    <dbReference type="NCBI Taxonomy" id="267608"/>
    <lineage>
        <taxon>Bacteria</taxon>
        <taxon>Pseudomonadati</taxon>
        <taxon>Pseudomonadota</taxon>
        <taxon>Betaproteobacteria</taxon>
        <taxon>Burkholderiales</taxon>
        <taxon>Burkholderiaceae</taxon>
        <taxon>Ralstonia</taxon>
        <taxon>Ralstonia solanacearum species complex</taxon>
    </lineage>
</organism>
<proteinExistence type="inferred from homology"/>
<gene>
    <name evidence="1" type="primary">ureB</name>
    <name type="ordered locus">RSc2033</name>
    <name type="ORF">RS02962</name>
</gene>
<dbReference type="EC" id="3.5.1.5" evidence="1"/>
<dbReference type="EMBL" id="AL646052">
    <property type="protein sequence ID" value="CAD15735.1"/>
    <property type="molecule type" value="Genomic_DNA"/>
</dbReference>
<dbReference type="RefSeq" id="WP_011001968.1">
    <property type="nucleotide sequence ID" value="NC_003295.1"/>
</dbReference>
<dbReference type="SMR" id="Q8XXT0"/>
<dbReference type="STRING" id="267608.RSc2033"/>
<dbReference type="EnsemblBacteria" id="CAD15735">
    <property type="protein sequence ID" value="CAD15735"/>
    <property type="gene ID" value="RSc2033"/>
</dbReference>
<dbReference type="KEGG" id="rso:RSc2033"/>
<dbReference type="eggNOG" id="COG0832">
    <property type="taxonomic scope" value="Bacteria"/>
</dbReference>
<dbReference type="HOGENOM" id="CLU_129707_1_1_4"/>
<dbReference type="UniPathway" id="UPA00258">
    <property type="reaction ID" value="UER00370"/>
</dbReference>
<dbReference type="Proteomes" id="UP000001436">
    <property type="component" value="Chromosome"/>
</dbReference>
<dbReference type="GO" id="GO:0035550">
    <property type="term" value="C:urease complex"/>
    <property type="evidence" value="ECO:0007669"/>
    <property type="project" value="InterPro"/>
</dbReference>
<dbReference type="GO" id="GO:0009039">
    <property type="term" value="F:urease activity"/>
    <property type="evidence" value="ECO:0007669"/>
    <property type="project" value="UniProtKB-UniRule"/>
</dbReference>
<dbReference type="GO" id="GO:0043419">
    <property type="term" value="P:urea catabolic process"/>
    <property type="evidence" value="ECO:0007669"/>
    <property type="project" value="UniProtKB-UniRule"/>
</dbReference>
<dbReference type="CDD" id="cd00407">
    <property type="entry name" value="Urease_beta"/>
    <property type="match status" value="1"/>
</dbReference>
<dbReference type="FunFam" id="2.10.150.10:FF:000001">
    <property type="entry name" value="Urease subunit beta"/>
    <property type="match status" value="1"/>
</dbReference>
<dbReference type="Gene3D" id="2.10.150.10">
    <property type="entry name" value="Urease, beta subunit"/>
    <property type="match status" value="1"/>
</dbReference>
<dbReference type="HAMAP" id="MF_01954">
    <property type="entry name" value="Urease_beta"/>
    <property type="match status" value="1"/>
</dbReference>
<dbReference type="InterPro" id="IPR002019">
    <property type="entry name" value="Urease_beta-like"/>
</dbReference>
<dbReference type="InterPro" id="IPR036461">
    <property type="entry name" value="Urease_betasu_sf"/>
</dbReference>
<dbReference type="InterPro" id="IPR050069">
    <property type="entry name" value="Urease_subunit"/>
</dbReference>
<dbReference type="NCBIfam" id="NF009682">
    <property type="entry name" value="PRK13203.1"/>
    <property type="match status" value="1"/>
</dbReference>
<dbReference type="NCBIfam" id="TIGR00192">
    <property type="entry name" value="urease_beta"/>
    <property type="match status" value="1"/>
</dbReference>
<dbReference type="PANTHER" id="PTHR33569">
    <property type="entry name" value="UREASE"/>
    <property type="match status" value="1"/>
</dbReference>
<dbReference type="PANTHER" id="PTHR33569:SF1">
    <property type="entry name" value="UREASE"/>
    <property type="match status" value="1"/>
</dbReference>
<dbReference type="Pfam" id="PF00699">
    <property type="entry name" value="Urease_beta"/>
    <property type="match status" value="1"/>
</dbReference>
<dbReference type="SUPFAM" id="SSF51278">
    <property type="entry name" value="Urease, beta-subunit"/>
    <property type="match status" value="1"/>
</dbReference>
<feature type="chain" id="PRO_0000234268" description="Urease subunit beta">
    <location>
        <begin position="1"/>
        <end position="101"/>
    </location>
</feature>
<reference key="1">
    <citation type="journal article" date="2002" name="Nature">
        <title>Genome sequence of the plant pathogen Ralstonia solanacearum.</title>
        <authorList>
            <person name="Salanoubat M."/>
            <person name="Genin S."/>
            <person name="Artiguenave F."/>
            <person name="Gouzy J."/>
            <person name="Mangenot S."/>
            <person name="Arlat M."/>
            <person name="Billault A."/>
            <person name="Brottier P."/>
            <person name="Camus J.-C."/>
            <person name="Cattolico L."/>
            <person name="Chandler M."/>
            <person name="Choisne N."/>
            <person name="Claudel-Renard C."/>
            <person name="Cunnac S."/>
            <person name="Demange N."/>
            <person name="Gaspin C."/>
            <person name="Lavie M."/>
            <person name="Moisan A."/>
            <person name="Robert C."/>
            <person name="Saurin W."/>
            <person name="Schiex T."/>
            <person name="Siguier P."/>
            <person name="Thebault P."/>
            <person name="Whalen M."/>
            <person name="Wincker P."/>
            <person name="Levy M."/>
            <person name="Weissenbach J."/>
            <person name="Boucher C.A."/>
        </authorList>
    </citation>
    <scope>NUCLEOTIDE SEQUENCE [LARGE SCALE GENOMIC DNA]</scope>
    <source>
        <strain>ATCC BAA-1114 / GMI1000</strain>
    </source>
</reference>
<sequence>MIPGELLPQDGDLELNAGRPTLTVTVANTGDRPVQIGSHYHFHEVNDALRFDREATRGYRLNIAAGTAVRFEPGQERTVELVALAGDRVVYGFAGRVMGKL</sequence>